<dbReference type="EMBL" id="CP001251">
    <property type="protein sequence ID" value="ACK42368.1"/>
    <property type="molecule type" value="Genomic_DNA"/>
</dbReference>
<dbReference type="RefSeq" id="WP_012583451.1">
    <property type="nucleotide sequence ID" value="NC_011661.1"/>
</dbReference>
<dbReference type="RefSeq" id="YP_002352982.1">
    <property type="nucleotide sequence ID" value="NC_011661.1"/>
</dbReference>
<dbReference type="SMR" id="B8E291"/>
<dbReference type="FunCoup" id="B8E291">
    <property type="interactions" value="288"/>
</dbReference>
<dbReference type="STRING" id="515635.Dtur_1089"/>
<dbReference type="EnsemblBacteria" id="ACK42368">
    <property type="protein sequence ID" value="ACK42368"/>
    <property type="gene ID" value="Dtur_1089"/>
</dbReference>
<dbReference type="KEGG" id="dtu:Dtur_1089"/>
<dbReference type="PATRIC" id="fig|515635.4.peg.1125"/>
<dbReference type="eggNOG" id="COG1219">
    <property type="taxonomic scope" value="Bacteria"/>
</dbReference>
<dbReference type="HOGENOM" id="CLU_014218_8_2_0"/>
<dbReference type="InParanoid" id="B8E291"/>
<dbReference type="OrthoDB" id="9804062at2"/>
<dbReference type="Proteomes" id="UP000007719">
    <property type="component" value="Chromosome"/>
</dbReference>
<dbReference type="GO" id="GO:0009376">
    <property type="term" value="C:HslUV protease complex"/>
    <property type="evidence" value="ECO:0000318"/>
    <property type="project" value="GO_Central"/>
</dbReference>
<dbReference type="GO" id="GO:0005524">
    <property type="term" value="F:ATP binding"/>
    <property type="evidence" value="ECO:0000318"/>
    <property type="project" value="GO_Central"/>
</dbReference>
<dbReference type="GO" id="GO:0016887">
    <property type="term" value="F:ATP hydrolysis activity"/>
    <property type="evidence" value="ECO:0000318"/>
    <property type="project" value="GO_Central"/>
</dbReference>
<dbReference type="GO" id="GO:0140662">
    <property type="term" value="F:ATP-dependent protein folding chaperone"/>
    <property type="evidence" value="ECO:0007669"/>
    <property type="project" value="InterPro"/>
</dbReference>
<dbReference type="GO" id="GO:0046983">
    <property type="term" value="F:protein dimerization activity"/>
    <property type="evidence" value="ECO:0007669"/>
    <property type="project" value="InterPro"/>
</dbReference>
<dbReference type="GO" id="GO:0051082">
    <property type="term" value="F:unfolded protein binding"/>
    <property type="evidence" value="ECO:0007669"/>
    <property type="project" value="UniProtKB-UniRule"/>
</dbReference>
<dbReference type="GO" id="GO:0008270">
    <property type="term" value="F:zinc ion binding"/>
    <property type="evidence" value="ECO:0007669"/>
    <property type="project" value="InterPro"/>
</dbReference>
<dbReference type="GO" id="GO:0051301">
    <property type="term" value="P:cell division"/>
    <property type="evidence" value="ECO:0000318"/>
    <property type="project" value="GO_Central"/>
</dbReference>
<dbReference type="GO" id="GO:0051603">
    <property type="term" value="P:proteolysis involved in protein catabolic process"/>
    <property type="evidence" value="ECO:0000318"/>
    <property type="project" value="GO_Central"/>
</dbReference>
<dbReference type="CDD" id="cd19497">
    <property type="entry name" value="RecA-like_ClpX"/>
    <property type="match status" value="1"/>
</dbReference>
<dbReference type="FunFam" id="1.10.8.60:FF:000002">
    <property type="entry name" value="ATP-dependent Clp protease ATP-binding subunit ClpX"/>
    <property type="match status" value="1"/>
</dbReference>
<dbReference type="FunFam" id="3.40.50.300:FF:000005">
    <property type="entry name" value="ATP-dependent Clp protease ATP-binding subunit ClpX"/>
    <property type="match status" value="1"/>
</dbReference>
<dbReference type="Gene3D" id="1.10.8.60">
    <property type="match status" value="1"/>
</dbReference>
<dbReference type="Gene3D" id="6.20.220.10">
    <property type="entry name" value="ClpX chaperone, C4-type zinc finger domain"/>
    <property type="match status" value="1"/>
</dbReference>
<dbReference type="Gene3D" id="3.40.50.300">
    <property type="entry name" value="P-loop containing nucleotide triphosphate hydrolases"/>
    <property type="match status" value="1"/>
</dbReference>
<dbReference type="HAMAP" id="MF_00175">
    <property type="entry name" value="ClpX"/>
    <property type="match status" value="1"/>
</dbReference>
<dbReference type="InterPro" id="IPR003593">
    <property type="entry name" value="AAA+_ATPase"/>
</dbReference>
<dbReference type="InterPro" id="IPR050052">
    <property type="entry name" value="ATP-dep_Clp_protease_ClpX"/>
</dbReference>
<dbReference type="InterPro" id="IPR003959">
    <property type="entry name" value="ATPase_AAA_core"/>
</dbReference>
<dbReference type="InterPro" id="IPR019489">
    <property type="entry name" value="Clp_ATPase_C"/>
</dbReference>
<dbReference type="InterPro" id="IPR004487">
    <property type="entry name" value="Clp_protease_ATP-bd_su_ClpX"/>
</dbReference>
<dbReference type="InterPro" id="IPR046425">
    <property type="entry name" value="ClpX_bact"/>
</dbReference>
<dbReference type="InterPro" id="IPR027417">
    <property type="entry name" value="P-loop_NTPase"/>
</dbReference>
<dbReference type="InterPro" id="IPR010603">
    <property type="entry name" value="Znf_CppX_C4"/>
</dbReference>
<dbReference type="InterPro" id="IPR038366">
    <property type="entry name" value="Znf_CppX_C4_sf"/>
</dbReference>
<dbReference type="NCBIfam" id="TIGR00382">
    <property type="entry name" value="clpX"/>
    <property type="match status" value="1"/>
</dbReference>
<dbReference type="NCBIfam" id="NF003745">
    <property type="entry name" value="PRK05342.1"/>
    <property type="match status" value="1"/>
</dbReference>
<dbReference type="PANTHER" id="PTHR48102:SF7">
    <property type="entry name" value="ATP-DEPENDENT CLP PROTEASE ATP-BINDING SUBUNIT CLPX-LIKE, MITOCHONDRIAL"/>
    <property type="match status" value="1"/>
</dbReference>
<dbReference type="PANTHER" id="PTHR48102">
    <property type="entry name" value="ATP-DEPENDENT CLP PROTEASE ATP-BINDING SUBUNIT CLPX-LIKE, MITOCHONDRIAL-RELATED"/>
    <property type="match status" value="1"/>
</dbReference>
<dbReference type="Pfam" id="PF07724">
    <property type="entry name" value="AAA_2"/>
    <property type="match status" value="1"/>
</dbReference>
<dbReference type="Pfam" id="PF10431">
    <property type="entry name" value="ClpB_D2-small"/>
    <property type="match status" value="1"/>
</dbReference>
<dbReference type="Pfam" id="PF06689">
    <property type="entry name" value="zf-C4_ClpX"/>
    <property type="match status" value="1"/>
</dbReference>
<dbReference type="SMART" id="SM00382">
    <property type="entry name" value="AAA"/>
    <property type="match status" value="1"/>
</dbReference>
<dbReference type="SMART" id="SM01086">
    <property type="entry name" value="ClpB_D2-small"/>
    <property type="match status" value="1"/>
</dbReference>
<dbReference type="SMART" id="SM00994">
    <property type="entry name" value="zf-C4_ClpX"/>
    <property type="match status" value="1"/>
</dbReference>
<dbReference type="SUPFAM" id="SSF57716">
    <property type="entry name" value="Glucocorticoid receptor-like (DNA-binding domain)"/>
    <property type="match status" value="1"/>
</dbReference>
<dbReference type="SUPFAM" id="SSF52540">
    <property type="entry name" value="P-loop containing nucleoside triphosphate hydrolases"/>
    <property type="match status" value="1"/>
</dbReference>
<dbReference type="PROSITE" id="PS51902">
    <property type="entry name" value="CLPX_ZB"/>
    <property type="match status" value="1"/>
</dbReference>
<protein>
    <recommendedName>
        <fullName evidence="1">ATP-dependent Clp protease ATP-binding subunit ClpX</fullName>
    </recommendedName>
</protein>
<proteinExistence type="inferred from homology"/>
<sequence>MSDKNIRCSFCGRTQKEVKKLIAGPGVYICDECVKLAYDIIEEEDSEEIEEENQEFVLPKPHEIKNFLDQYVIGQERAKKILSVAVYNHYKRIFMRSKITEDVEIQKSNVLLIGPTGVGKTLLAETLAKFLKVPFAIADATTLTEAGYVGEDVENILLRLIQNADWDIKRAEKGIVYIDEIDKISRKSENPSITRDVSGEGVQQALLRIVEGTIANVPPQGGRKHPYQEFIQINTKDILFIAGGSFEGIEKIVEKRLDVSNIGFGAQIEPKNRKSLTQILNHIIPEDLIKFGMIPEFVGRFPVVAVLEPLSEEALLKILTEPKNALVKQYKALLSMEGVEINFTDEALKAIVKEAIDKATGARGLRAVMEELMLDLMYELPNLGIKKFTVTPELVYNRNKISQDLLKKLAG</sequence>
<keyword id="KW-0067">ATP-binding</keyword>
<keyword id="KW-0143">Chaperone</keyword>
<keyword id="KW-0479">Metal-binding</keyword>
<keyword id="KW-0547">Nucleotide-binding</keyword>
<keyword id="KW-1185">Reference proteome</keyword>
<keyword id="KW-0862">Zinc</keyword>
<feature type="chain" id="PRO_1000189688" description="ATP-dependent Clp protease ATP-binding subunit ClpX">
    <location>
        <begin position="1"/>
        <end position="411"/>
    </location>
</feature>
<feature type="domain" description="ClpX-type ZB" evidence="2">
    <location>
        <begin position="1"/>
        <end position="49"/>
    </location>
</feature>
<feature type="binding site" evidence="2">
    <location>
        <position position="8"/>
    </location>
    <ligand>
        <name>Zn(2+)</name>
        <dbReference type="ChEBI" id="CHEBI:29105"/>
    </ligand>
</feature>
<feature type="binding site" evidence="2">
    <location>
        <position position="11"/>
    </location>
    <ligand>
        <name>Zn(2+)</name>
        <dbReference type="ChEBI" id="CHEBI:29105"/>
    </ligand>
</feature>
<feature type="binding site" evidence="2">
    <location>
        <position position="30"/>
    </location>
    <ligand>
        <name>Zn(2+)</name>
        <dbReference type="ChEBI" id="CHEBI:29105"/>
    </ligand>
</feature>
<feature type="binding site" evidence="2">
    <location>
        <position position="33"/>
    </location>
    <ligand>
        <name>Zn(2+)</name>
        <dbReference type="ChEBI" id="CHEBI:29105"/>
    </ligand>
</feature>
<feature type="binding site" evidence="1">
    <location>
        <begin position="115"/>
        <end position="122"/>
    </location>
    <ligand>
        <name>ATP</name>
        <dbReference type="ChEBI" id="CHEBI:30616"/>
    </ligand>
</feature>
<comment type="function">
    <text evidence="1">ATP-dependent specificity component of the Clp protease. It directs the protease to specific substrates. Can perform chaperone functions in the absence of ClpP.</text>
</comment>
<comment type="subunit">
    <text evidence="1">Component of the ClpX-ClpP complex. Forms a hexameric ring that, in the presence of ATP, binds to fourteen ClpP subunits assembled into a disk-like structure with a central cavity, resembling the structure of eukaryotic proteasomes.</text>
</comment>
<comment type="similarity">
    <text evidence="1">Belongs to the ClpX chaperone family.</text>
</comment>
<gene>
    <name evidence="1" type="primary">clpX</name>
    <name type="ordered locus">Dtur_1089</name>
</gene>
<reference key="1">
    <citation type="journal article" date="2016" name="Front. Microbiol.">
        <title>The complete genome sequence of hyperthermophile Dictyoglomus turgidum DSM 6724 reveals a specialized carbohydrate fermentor.</title>
        <authorList>
            <person name="Brumm P.J."/>
            <person name="Gowda K."/>
            <person name="Robb F.T."/>
            <person name="Mead D.A."/>
        </authorList>
    </citation>
    <scope>NUCLEOTIDE SEQUENCE [LARGE SCALE GENOMIC DNA]</scope>
    <source>
        <strain>DSM 6724 / Z-1310</strain>
    </source>
</reference>
<evidence type="ECO:0000255" key="1">
    <source>
        <dbReference type="HAMAP-Rule" id="MF_00175"/>
    </source>
</evidence>
<evidence type="ECO:0000255" key="2">
    <source>
        <dbReference type="PROSITE-ProRule" id="PRU01250"/>
    </source>
</evidence>
<organism>
    <name type="scientific">Dictyoglomus turgidum (strain DSM 6724 / Z-1310)</name>
    <dbReference type="NCBI Taxonomy" id="515635"/>
    <lineage>
        <taxon>Bacteria</taxon>
        <taxon>Pseudomonadati</taxon>
        <taxon>Dictyoglomota</taxon>
        <taxon>Dictyoglomia</taxon>
        <taxon>Dictyoglomales</taxon>
        <taxon>Dictyoglomaceae</taxon>
        <taxon>Dictyoglomus</taxon>
    </lineage>
</organism>
<name>CLPX_DICTD</name>
<accession>B8E291</accession>